<comment type="function">
    <text>May bind to RNA via its Arg/Ser-rich domain.</text>
</comment>
<comment type="subunit">
    <text evidence="4">Interacts with SCNM1.</text>
</comment>
<comment type="subcellular location">
    <subcellularLocation>
        <location evidence="4">Nucleus speckle</location>
    </subcellularLocation>
    <subcellularLocation>
        <location evidence="4">Nucleus</location>
        <location evidence="4">Nucleoplasm</location>
    </subcellularLocation>
    <text evidence="4">Colocalizes with SCNM1 and SNRNP70 in nuclear speckles.</text>
</comment>
<comment type="alternative products">
    <event type="alternative splicing"/>
    <isoform>
        <id>Q7TNC4-1</id>
        <name>1</name>
        <sequence type="displayed"/>
    </isoform>
    <isoform>
        <id>Q7TNC4-2</id>
        <name>2</name>
        <sequence type="described" ref="VSP_010218 VSP_010219 VSP_010220"/>
    </isoform>
    <isoform>
        <id>Q7TNC4-3</id>
        <name>3</name>
        <sequence type="described" ref="VSP_010219 VSP_010220"/>
    </isoform>
    <isoform>
        <id>Q7TNC4-4</id>
        <name>4</name>
        <sequence type="described" ref="VSP_010218"/>
    </isoform>
</comment>
<comment type="tissue specificity">
    <text evidence="4">All isoforms are expressed in brain, kidney, heart, thymus, stomach, skeletal muscle, testis and spinal cord.</text>
</comment>
<comment type="similarity">
    <text evidence="6">Belongs to the Luc7 family.</text>
</comment>
<organism>
    <name type="scientific">Mus musculus</name>
    <name type="common">Mouse</name>
    <dbReference type="NCBI Taxonomy" id="10090"/>
    <lineage>
        <taxon>Eukaryota</taxon>
        <taxon>Metazoa</taxon>
        <taxon>Chordata</taxon>
        <taxon>Craniata</taxon>
        <taxon>Vertebrata</taxon>
        <taxon>Euteleostomi</taxon>
        <taxon>Mammalia</taxon>
        <taxon>Eutheria</taxon>
        <taxon>Euarchontoglires</taxon>
        <taxon>Glires</taxon>
        <taxon>Rodentia</taxon>
        <taxon>Myomorpha</taxon>
        <taxon>Muroidea</taxon>
        <taxon>Muridae</taxon>
        <taxon>Murinae</taxon>
        <taxon>Mus</taxon>
        <taxon>Mus</taxon>
    </lineage>
</organism>
<keyword id="KW-0025">Alternative splicing</keyword>
<keyword id="KW-0175">Coiled coil</keyword>
<keyword id="KW-0379">Hydroxylation</keyword>
<keyword id="KW-0539">Nucleus</keyword>
<keyword id="KW-0597">Phosphoprotein</keyword>
<keyword id="KW-1185">Reference proteome</keyword>
<proteinExistence type="evidence at protein level"/>
<accession>Q7TNC4</accession>
<accession>Q99LM5</accession>
<accession>Q99PC3</accession>
<gene>
    <name type="primary">Luc7l2</name>
</gene>
<reference key="1">
    <citation type="submission" date="2000-11" db="EMBL/GenBank/DDBJ databases">
        <title>CGI-74 homolog in the mouse.</title>
        <authorList>
            <person name="Utsch B."/>
            <person name="Albers N."/>
            <person name="Wickert L."/>
            <person name="Schubert R."/>
            <person name="Bidlingmaier F."/>
            <person name="Ludwig M."/>
        </authorList>
    </citation>
    <scope>NUCLEOTIDE SEQUENCE [MRNA] (ISOFORM 1)</scope>
    <source>
        <strain>NMRI</strain>
        <tissue>Liver</tissue>
    </source>
</reference>
<reference key="2">
    <citation type="journal article" date="2004" name="Genome Res.">
        <title>The status, quality, and expansion of the NIH full-length cDNA project: the Mammalian Gene Collection (MGC).</title>
        <authorList>
            <consortium name="The MGC Project Team"/>
        </authorList>
    </citation>
    <scope>NUCLEOTIDE SEQUENCE [LARGE SCALE MRNA] (ISOFORMS 1 AND 2)</scope>
    <scope>NUCLEOTIDE SEQUENCE [LARGE SCALE MRNA] OF 222-392 (ISOFORM 3)</scope>
    <source>
        <strain>C57BL/6J</strain>
        <tissue>Brain</tissue>
    </source>
</reference>
<reference key="3">
    <citation type="journal article" date="2007" name="Hum. Mol. Genet.">
        <title>Evidence for a direct role of the disease modifier SCNM1 in splicing.</title>
        <authorList>
            <person name="Howell V.M."/>
            <person name="Jones J.M."/>
            <person name="Bergren S.K."/>
            <person name="Li L."/>
            <person name="Billi A.C."/>
            <person name="Avenarius M.R."/>
            <person name="Meisler M.H."/>
        </authorList>
    </citation>
    <scope>NUCLEOTIDE SEQUENCE [MRNA] OF 135-311 (ISOFORMS 1/2/3/4)</scope>
    <scope>INTERACTION WITH SCNM1</scope>
    <scope>SUBCELLULAR LOCATION</scope>
    <scope>ALTERNATIVE SPLICING</scope>
    <scope>TISSUE SPECIFICITY</scope>
    <source>
        <tissue>Embryo</tissue>
    </source>
</reference>
<reference key="4">
    <citation type="journal article" date="2009" name="Mol. Cell. Proteomics">
        <title>Large scale localization of protein phosphorylation by use of electron capture dissociation mass spectrometry.</title>
        <authorList>
            <person name="Sweet S.M."/>
            <person name="Bailey C.M."/>
            <person name="Cunningham D.L."/>
            <person name="Heath J.K."/>
            <person name="Cooper H.J."/>
        </authorList>
    </citation>
    <scope>IDENTIFICATION BY MASS SPECTROMETRY [LARGE SCALE ANALYSIS]</scope>
    <source>
        <tissue>Embryonic fibroblast</tissue>
    </source>
</reference>
<reference key="5">
    <citation type="journal article" date="2010" name="Cell">
        <title>A tissue-specific atlas of mouse protein phosphorylation and expression.</title>
        <authorList>
            <person name="Huttlin E.L."/>
            <person name="Jedrychowski M.P."/>
            <person name="Elias J.E."/>
            <person name="Goswami T."/>
            <person name="Rad R."/>
            <person name="Beausoleil S.A."/>
            <person name="Villen J."/>
            <person name="Haas W."/>
            <person name="Sowa M.E."/>
            <person name="Gygi S.P."/>
        </authorList>
    </citation>
    <scope>PHOSPHORYLATION [LARGE SCALE ANALYSIS] AT SER-18</scope>
    <scope>IDENTIFICATION BY MASS SPECTROMETRY [LARGE SCALE ANALYSIS]</scope>
    <source>
        <tissue>Heart</tissue>
        <tissue>Kidney</tissue>
        <tissue>Liver</tissue>
        <tissue>Lung</tissue>
        <tissue>Pancreas</tissue>
        <tissue>Spleen</tissue>
        <tissue>Testis</tissue>
    </source>
</reference>
<evidence type="ECO:0000250" key="1"/>
<evidence type="ECO:0000255" key="2"/>
<evidence type="ECO:0000256" key="3">
    <source>
        <dbReference type="SAM" id="MobiDB-lite"/>
    </source>
</evidence>
<evidence type="ECO:0000269" key="4">
    <source>
    </source>
</evidence>
<evidence type="ECO:0000303" key="5">
    <source>
    </source>
</evidence>
<evidence type="ECO:0000305" key="6"/>
<evidence type="ECO:0007744" key="7">
    <source>
    </source>
</evidence>
<dbReference type="EMBL" id="AF318301">
    <property type="protein sequence ID" value="AAK01182.1"/>
    <property type="molecule type" value="mRNA"/>
</dbReference>
<dbReference type="EMBL" id="BC002314">
    <property type="protein sequence ID" value="AAH02314.1"/>
    <property type="molecule type" value="mRNA"/>
</dbReference>
<dbReference type="EMBL" id="BC056354">
    <property type="protein sequence ID" value="AAH56354.1"/>
    <property type="molecule type" value="mRNA"/>
</dbReference>
<dbReference type="EMBL" id="BC056383">
    <property type="protein sequence ID" value="AAH56383.1"/>
    <property type="molecule type" value="mRNA"/>
</dbReference>
<dbReference type="EMBL" id="BC056970">
    <property type="protein sequence ID" value="AAH56970.1"/>
    <property type="molecule type" value="mRNA"/>
</dbReference>
<dbReference type="CCDS" id="CCDS20015.1">
    <molecule id="Q7TNC4-1"/>
</dbReference>
<dbReference type="CCDS" id="CCDS51751.1">
    <molecule id="Q7TNC4-2"/>
</dbReference>
<dbReference type="RefSeq" id="NP_001164319.1">
    <molecule id="Q7TNC4-4"/>
    <property type="nucleotide sequence ID" value="NM_001170848.2"/>
</dbReference>
<dbReference type="RefSeq" id="NP_001164320.1">
    <molecule id="Q7TNC4-2"/>
    <property type="nucleotide sequence ID" value="NM_001170849.2"/>
</dbReference>
<dbReference type="RefSeq" id="NP_619621.2">
    <molecule id="Q7TNC4-1"/>
    <property type="nucleotide sequence ID" value="NM_138680.3"/>
</dbReference>
<dbReference type="SMR" id="Q7TNC4"/>
<dbReference type="BioGRID" id="228673">
    <property type="interactions" value="18"/>
</dbReference>
<dbReference type="FunCoup" id="Q7TNC4">
    <property type="interactions" value="3236"/>
</dbReference>
<dbReference type="IntAct" id="Q7TNC4">
    <property type="interactions" value="2"/>
</dbReference>
<dbReference type="STRING" id="10090.ENSMUSP00000055254"/>
<dbReference type="GlyGen" id="Q7TNC4">
    <property type="glycosylation" value="1 site, 1 O-linked glycan (1 site)"/>
</dbReference>
<dbReference type="iPTMnet" id="Q7TNC4"/>
<dbReference type="PhosphoSitePlus" id="Q7TNC4"/>
<dbReference type="SwissPalm" id="Q7TNC4"/>
<dbReference type="jPOST" id="Q7TNC4"/>
<dbReference type="PaxDb" id="10090-ENSMUSP00000055254"/>
<dbReference type="PeptideAtlas" id="Q7TNC4"/>
<dbReference type="ProteomicsDB" id="252455">
    <molecule id="Q7TNC4-1"/>
</dbReference>
<dbReference type="ProteomicsDB" id="252456">
    <molecule id="Q7TNC4-2"/>
</dbReference>
<dbReference type="ProteomicsDB" id="252457">
    <molecule id="Q7TNC4-3"/>
</dbReference>
<dbReference type="ProteomicsDB" id="252458">
    <molecule id="Q7TNC4-4"/>
</dbReference>
<dbReference type="Pumba" id="Q7TNC4"/>
<dbReference type="Antibodypedia" id="53629">
    <property type="antibodies" value="136 antibodies from 26 providers"/>
</dbReference>
<dbReference type="DNASU" id="192196"/>
<dbReference type="Ensembl" id="ENSMUST00000057692.11">
    <molecule id="Q7TNC4-1"/>
    <property type="protein sequence ID" value="ENSMUSP00000055254.5"/>
    <property type="gene ID" value="ENSMUSG00000029823.17"/>
</dbReference>
<dbReference type="Ensembl" id="ENSMUST00000161538.8">
    <molecule id="Q7TNC4-2"/>
    <property type="protein sequence ID" value="ENSMUSP00000124010.2"/>
    <property type="gene ID" value="ENSMUSG00000029823.17"/>
</dbReference>
<dbReference type="GeneID" id="192196"/>
<dbReference type="KEGG" id="mmu:192196"/>
<dbReference type="UCSC" id="uc009bkl.2">
    <molecule id="Q7TNC4-2"/>
    <property type="organism name" value="mouse"/>
</dbReference>
<dbReference type="UCSC" id="uc009bkm.2">
    <molecule id="Q7TNC4-1"/>
    <property type="organism name" value="mouse"/>
</dbReference>
<dbReference type="AGR" id="MGI:2183260"/>
<dbReference type="CTD" id="51631"/>
<dbReference type="MGI" id="MGI:2183260">
    <property type="gene designation" value="Luc7l2"/>
</dbReference>
<dbReference type="VEuPathDB" id="HostDB:ENSMUSG00000029823"/>
<dbReference type="eggNOG" id="KOG0796">
    <property type="taxonomic scope" value="Eukaryota"/>
</dbReference>
<dbReference type="GeneTree" id="ENSGT00950000183213"/>
<dbReference type="HOGENOM" id="CLU_030397_3_0_1"/>
<dbReference type="InParanoid" id="Q7TNC4"/>
<dbReference type="OMA" id="CPHELFP"/>
<dbReference type="OrthoDB" id="153872at2759"/>
<dbReference type="PhylomeDB" id="Q7TNC4"/>
<dbReference type="TreeFam" id="TF317607"/>
<dbReference type="BioGRID-ORCS" id="192196">
    <property type="hits" value="2 hits in 75 CRISPR screens"/>
</dbReference>
<dbReference type="ChiTaRS" id="Luc7l2">
    <property type="organism name" value="mouse"/>
</dbReference>
<dbReference type="PRO" id="PR:Q7TNC4"/>
<dbReference type="Proteomes" id="UP000000589">
    <property type="component" value="Chromosome 6"/>
</dbReference>
<dbReference type="RNAct" id="Q7TNC4">
    <property type="molecule type" value="protein"/>
</dbReference>
<dbReference type="Bgee" id="ENSMUSG00000029823">
    <property type="expression patterns" value="Expressed in mammillary body and 258 other cell types or tissues"/>
</dbReference>
<dbReference type="ExpressionAtlas" id="Q7TNC4">
    <property type="expression patterns" value="baseline and differential"/>
</dbReference>
<dbReference type="GO" id="GO:0016607">
    <property type="term" value="C:nuclear speck"/>
    <property type="evidence" value="ECO:0000314"/>
    <property type="project" value="UniProtKB"/>
</dbReference>
<dbReference type="GO" id="GO:0005685">
    <property type="term" value="C:U1 snRNP"/>
    <property type="evidence" value="ECO:0007669"/>
    <property type="project" value="InterPro"/>
</dbReference>
<dbReference type="GO" id="GO:0019899">
    <property type="term" value="F:enzyme binding"/>
    <property type="evidence" value="ECO:0007669"/>
    <property type="project" value="Ensembl"/>
</dbReference>
<dbReference type="GO" id="GO:0003729">
    <property type="term" value="F:mRNA binding"/>
    <property type="evidence" value="ECO:0007669"/>
    <property type="project" value="InterPro"/>
</dbReference>
<dbReference type="GO" id="GO:0006376">
    <property type="term" value="P:mRNA splice site recognition"/>
    <property type="evidence" value="ECO:0007669"/>
    <property type="project" value="InterPro"/>
</dbReference>
<dbReference type="InterPro" id="IPR004882">
    <property type="entry name" value="Luc7-rel"/>
</dbReference>
<dbReference type="PANTHER" id="PTHR12375">
    <property type="entry name" value="RNA-BINDING PROTEIN LUC7-RELATED"/>
    <property type="match status" value="1"/>
</dbReference>
<dbReference type="Pfam" id="PF03194">
    <property type="entry name" value="LUC7"/>
    <property type="match status" value="1"/>
</dbReference>
<feature type="chain" id="PRO_0000187283" description="Putative RNA-binding protein Luc7-like 2">
    <location>
        <begin position="1"/>
        <end position="392"/>
    </location>
</feature>
<feature type="region of interest" description="Disordered" evidence="3">
    <location>
        <begin position="235"/>
        <end position="392"/>
    </location>
</feature>
<feature type="coiled-coil region" evidence="2">
    <location>
        <begin position="102"/>
        <end position="177"/>
    </location>
</feature>
<feature type="compositionally biased region" description="Basic and acidic residues" evidence="3">
    <location>
        <begin position="235"/>
        <end position="257"/>
    </location>
</feature>
<feature type="compositionally biased region" description="Basic residues" evidence="3">
    <location>
        <begin position="258"/>
        <end position="321"/>
    </location>
</feature>
<feature type="compositionally biased region" description="Basic and acidic residues" evidence="3">
    <location>
        <begin position="337"/>
        <end position="364"/>
    </location>
</feature>
<feature type="compositionally biased region" description="Basic and acidic residues" evidence="3">
    <location>
        <begin position="377"/>
        <end position="392"/>
    </location>
</feature>
<feature type="modified residue" description="Phosphoserine" evidence="7">
    <location>
        <position position="18"/>
    </location>
</feature>
<feature type="modified residue" description="5-hydroxylysine; by JMJD6" evidence="1">
    <location>
        <position position="266"/>
    </location>
</feature>
<feature type="modified residue" description="5-hydroxylysine; by JMJD6" evidence="1">
    <location>
        <position position="269"/>
    </location>
</feature>
<feature type="splice variant" id="VSP_010218" description="In isoform 2 and isoform 4." evidence="5">
    <location>
        <begin position="260"/>
        <end position="269"/>
    </location>
</feature>
<feature type="splice variant" id="VSP_010219" description="In isoform 2 and isoform 3." evidence="5">
    <original>S</original>
    <variation>Y</variation>
    <location>
        <position position="335"/>
    </location>
</feature>
<feature type="splice variant" id="VSP_010220" description="In isoform 2 and isoform 3." evidence="5">
    <location>
        <begin position="336"/>
        <end position="392"/>
    </location>
</feature>
<feature type="sequence conflict" description="In Ref. 2; AAH56383." evidence="6" ref="2">
    <original>G</original>
    <variation>E</variation>
    <location>
        <position position="147"/>
    </location>
</feature>
<feature type="sequence conflict" description="In Ref. 1; AAK01182." evidence="6" ref="1">
    <original>K</original>
    <variation>L</variation>
    <location>
        <position position="245"/>
    </location>
</feature>
<feature type="sequence conflict" description="In Ref. 1; AAK01182." evidence="6" ref="1">
    <original>R</original>
    <variation>W</variation>
    <location>
        <position position="259"/>
    </location>
</feature>
<name>LC7L2_MOUSE</name>
<protein>
    <recommendedName>
        <fullName>Putative RNA-binding protein Luc7-like 2</fullName>
    </recommendedName>
    <alternativeName>
        <fullName>CGI-74 homolog</fullName>
    </alternativeName>
</protein>
<sequence>MSAQAQMRAMLDQLMGTSRDGDTTRQRIKFSDDRVCKSHLLNCCPHDVLSGTRMDLGECLKVHDLALRADYEIASKEQDFFFELDAMDHLQSFIADCDRRTEVSKKRLAETQEEISAEVAAKAERVHELNEEIGKLLAKVEQLGAEGNVEESQKVMDEVEKARAKKREAEEVYRNSMPASSFQQQKLRVCEVCSAYLGLHDNDRRLADHFGGKLHLGFIEIREKLEELKRVVAEKQEKRNQERLKRREEREREEREKLRRSRSHSKNPKRSRSREHRRHRSRSMSRERKRRTRSKSREKRHRHRSRSSSRSRSRSHQRSRHSSRDRSRERSKRRSSKERFRDQDLASRDRDRSSRDRSPRDRDRKDKKRSYESANGRSEDRRSSEEREAGEI</sequence>